<dbReference type="EC" id="2.7.8.7" evidence="1"/>
<dbReference type="EMBL" id="CP001488">
    <property type="protein sequence ID" value="ACO00459.1"/>
    <property type="molecule type" value="Genomic_DNA"/>
</dbReference>
<dbReference type="RefSeq" id="WP_002963803.1">
    <property type="nucleotide sequence ID" value="NC_012441.1"/>
</dbReference>
<dbReference type="SMR" id="C0RI01"/>
<dbReference type="GeneID" id="97534013"/>
<dbReference type="KEGG" id="bmi:BMEA_A0696"/>
<dbReference type="HOGENOM" id="CLU_089696_0_2_5"/>
<dbReference type="Proteomes" id="UP000001748">
    <property type="component" value="Chromosome I"/>
</dbReference>
<dbReference type="GO" id="GO:0005737">
    <property type="term" value="C:cytoplasm"/>
    <property type="evidence" value="ECO:0007669"/>
    <property type="project" value="UniProtKB-SubCell"/>
</dbReference>
<dbReference type="GO" id="GO:0008897">
    <property type="term" value="F:holo-[acyl-carrier-protein] synthase activity"/>
    <property type="evidence" value="ECO:0007669"/>
    <property type="project" value="UniProtKB-UniRule"/>
</dbReference>
<dbReference type="GO" id="GO:0000287">
    <property type="term" value="F:magnesium ion binding"/>
    <property type="evidence" value="ECO:0007669"/>
    <property type="project" value="UniProtKB-UniRule"/>
</dbReference>
<dbReference type="GO" id="GO:0006633">
    <property type="term" value="P:fatty acid biosynthetic process"/>
    <property type="evidence" value="ECO:0007669"/>
    <property type="project" value="UniProtKB-UniRule"/>
</dbReference>
<dbReference type="Gene3D" id="3.90.470.20">
    <property type="entry name" value="4'-phosphopantetheinyl transferase domain"/>
    <property type="match status" value="1"/>
</dbReference>
<dbReference type="HAMAP" id="MF_00101">
    <property type="entry name" value="AcpS"/>
    <property type="match status" value="1"/>
</dbReference>
<dbReference type="InterPro" id="IPR008278">
    <property type="entry name" value="4-PPantetheinyl_Trfase_dom"/>
</dbReference>
<dbReference type="InterPro" id="IPR037143">
    <property type="entry name" value="4-PPantetheinyl_Trfase_dom_sf"/>
</dbReference>
<dbReference type="InterPro" id="IPR002582">
    <property type="entry name" value="ACPS"/>
</dbReference>
<dbReference type="InterPro" id="IPR004568">
    <property type="entry name" value="Ppantetheine-prot_Trfase_dom"/>
</dbReference>
<dbReference type="NCBIfam" id="TIGR00516">
    <property type="entry name" value="acpS"/>
    <property type="match status" value="1"/>
</dbReference>
<dbReference type="NCBIfam" id="TIGR00556">
    <property type="entry name" value="pantethn_trn"/>
    <property type="match status" value="1"/>
</dbReference>
<dbReference type="Pfam" id="PF01648">
    <property type="entry name" value="ACPS"/>
    <property type="match status" value="1"/>
</dbReference>
<dbReference type="SUPFAM" id="SSF56214">
    <property type="entry name" value="4'-phosphopantetheinyl transferase"/>
    <property type="match status" value="1"/>
</dbReference>
<organism>
    <name type="scientific">Brucella melitensis biotype 2 (strain ATCC 23457)</name>
    <dbReference type="NCBI Taxonomy" id="546272"/>
    <lineage>
        <taxon>Bacteria</taxon>
        <taxon>Pseudomonadati</taxon>
        <taxon>Pseudomonadota</taxon>
        <taxon>Alphaproteobacteria</taxon>
        <taxon>Hyphomicrobiales</taxon>
        <taxon>Brucellaceae</taxon>
        <taxon>Brucella/Ochrobactrum group</taxon>
        <taxon>Brucella</taxon>
    </lineage>
</organism>
<reference key="1">
    <citation type="submission" date="2009-03" db="EMBL/GenBank/DDBJ databases">
        <title>Brucella melitensis ATCC 23457 whole genome shotgun sequencing project.</title>
        <authorList>
            <person name="Setubal J.C."/>
            <person name="Boyle S."/>
            <person name="Crasta O.R."/>
            <person name="Gillespie J.J."/>
            <person name="Kenyon R.W."/>
            <person name="Lu J."/>
            <person name="Mane S."/>
            <person name="Nagrani S."/>
            <person name="Shallom J.M."/>
            <person name="Shallom S."/>
            <person name="Shukla M."/>
            <person name="Snyder E.E."/>
            <person name="Sobral B.W."/>
            <person name="Wattam A.R."/>
            <person name="Will R."/>
            <person name="Williams K."/>
            <person name="Yoo H."/>
            <person name="Munk C."/>
            <person name="Tapia R."/>
            <person name="Han C."/>
            <person name="Detter J.C."/>
            <person name="Bruce D."/>
            <person name="Brettin T.S."/>
        </authorList>
    </citation>
    <scope>NUCLEOTIDE SEQUENCE [LARGE SCALE GENOMIC DNA]</scope>
    <source>
        <strain>ATCC 23457</strain>
    </source>
</reference>
<accession>C0RI01</accession>
<name>ACPS_BRUMB</name>
<feature type="chain" id="PRO_1000118797" description="Holo-[acyl-carrier-protein] synthase">
    <location>
        <begin position="1"/>
        <end position="134"/>
    </location>
</feature>
<feature type="binding site" evidence="1">
    <location>
        <position position="8"/>
    </location>
    <ligand>
        <name>Mg(2+)</name>
        <dbReference type="ChEBI" id="CHEBI:18420"/>
    </ligand>
</feature>
<feature type="binding site" evidence="1">
    <location>
        <position position="57"/>
    </location>
    <ligand>
        <name>Mg(2+)</name>
        <dbReference type="ChEBI" id="CHEBI:18420"/>
    </ligand>
</feature>
<evidence type="ECO:0000255" key="1">
    <source>
        <dbReference type="HAMAP-Rule" id="MF_00101"/>
    </source>
</evidence>
<sequence length="134" mass="14645">MIVGIGSDLIDIRRVEKTLERHGSRFRDRVFTEIEQRKSEGRKQRAASYAKRFAAKEACAKALGTGIAEGVFWRDMGVVNTPSGKPTMHLTGGAAKQLQKLLPAGTNAAIHLTITDDFPLAQAFVIIEALPVLE</sequence>
<protein>
    <recommendedName>
        <fullName evidence="1">Holo-[acyl-carrier-protein] synthase</fullName>
        <shortName evidence="1">Holo-ACP synthase</shortName>
        <ecNumber evidence="1">2.7.8.7</ecNumber>
    </recommendedName>
    <alternativeName>
        <fullName evidence="1">4'-phosphopantetheinyl transferase AcpS</fullName>
    </alternativeName>
</protein>
<gene>
    <name evidence="1" type="primary">acpS</name>
    <name type="ordered locus">BMEA_A0696</name>
</gene>
<proteinExistence type="inferred from homology"/>
<comment type="function">
    <text evidence="1">Transfers the 4'-phosphopantetheine moiety from coenzyme A to a Ser of acyl-carrier-protein.</text>
</comment>
<comment type="catalytic activity">
    <reaction evidence="1">
        <text>apo-[ACP] + CoA = holo-[ACP] + adenosine 3',5'-bisphosphate + H(+)</text>
        <dbReference type="Rhea" id="RHEA:12068"/>
        <dbReference type="Rhea" id="RHEA-COMP:9685"/>
        <dbReference type="Rhea" id="RHEA-COMP:9690"/>
        <dbReference type="ChEBI" id="CHEBI:15378"/>
        <dbReference type="ChEBI" id="CHEBI:29999"/>
        <dbReference type="ChEBI" id="CHEBI:57287"/>
        <dbReference type="ChEBI" id="CHEBI:58343"/>
        <dbReference type="ChEBI" id="CHEBI:64479"/>
        <dbReference type="EC" id="2.7.8.7"/>
    </reaction>
</comment>
<comment type="cofactor">
    <cofactor evidence="1">
        <name>Mg(2+)</name>
        <dbReference type="ChEBI" id="CHEBI:18420"/>
    </cofactor>
</comment>
<comment type="subcellular location">
    <subcellularLocation>
        <location evidence="1">Cytoplasm</location>
    </subcellularLocation>
</comment>
<comment type="similarity">
    <text evidence="1">Belongs to the P-Pant transferase superfamily. AcpS family.</text>
</comment>
<keyword id="KW-0963">Cytoplasm</keyword>
<keyword id="KW-0275">Fatty acid biosynthesis</keyword>
<keyword id="KW-0276">Fatty acid metabolism</keyword>
<keyword id="KW-0444">Lipid biosynthesis</keyword>
<keyword id="KW-0443">Lipid metabolism</keyword>
<keyword id="KW-0460">Magnesium</keyword>
<keyword id="KW-0479">Metal-binding</keyword>
<keyword id="KW-0808">Transferase</keyword>